<organism>
    <name type="scientific">Arabidopsis thaliana</name>
    <name type="common">Mouse-ear cress</name>
    <dbReference type="NCBI Taxonomy" id="3702"/>
    <lineage>
        <taxon>Eukaryota</taxon>
        <taxon>Viridiplantae</taxon>
        <taxon>Streptophyta</taxon>
        <taxon>Embryophyta</taxon>
        <taxon>Tracheophyta</taxon>
        <taxon>Spermatophyta</taxon>
        <taxon>Magnoliopsida</taxon>
        <taxon>eudicotyledons</taxon>
        <taxon>Gunneridae</taxon>
        <taxon>Pentapetalae</taxon>
        <taxon>rosids</taxon>
        <taxon>malvids</taxon>
        <taxon>Brassicales</taxon>
        <taxon>Brassicaceae</taxon>
        <taxon>Camelineae</taxon>
        <taxon>Arabidopsis</taxon>
    </lineage>
</organism>
<keyword id="KW-0025">Alternative splicing</keyword>
<keyword id="KW-0028">Amino-acid biosynthesis</keyword>
<keyword id="KW-0057">Aromatic amino acid biosynthesis</keyword>
<keyword id="KW-0150">Chloroplast</keyword>
<keyword id="KW-0934">Plastid</keyword>
<keyword id="KW-1185">Reference proteome</keyword>
<keyword id="KW-0808">Transferase</keyword>
<keyword id="KW-0809">Transit peptide</keyword>
<reference key="1">
    <citation type="journal article" date="1991" name="Proc. Natl. Acad. Sci. U.S.A.">
        <title>Differential induction of 3-deoxy-D-arabino-heptulosonate 7-phosphate synthase genes in Arabidopsis thaliana by wounding and pathogenic attack.</title>
        <authorList>
            <person name="Keith B."/>
            <person name="Dong X.N."/>
            <person name="Ausubel F.M."/>
            <person name="Fink G.R."/>
        </authorList>
    </citation>
    <scope>NUCLEOTIDE SEQUENCE [MRNA]</scope>
</reference>
<reference key="2">
    <citation type="journal article" date="1999" name="Nature">
        <title>Sequence and analysis of chromosome 4 of the plant Arabidopsis thaliana.</title>
        <authorList>
            <person name="Mayer K.F.X."/>
            <person name="Schueller C."/>
            <person name="Wambutt R."/>
            <person name="Murphy G."/>
            <person name="Volckaert G."/>
            <person name="Pohl T."/>
            <person name="Duesterhoeft A."/>
            <person name="Stiekema W."/>
            <person name="Entian K.-D."/>
            <person name="Terryn N."/>
            <person name="Harris B."/>
            <person name="Ansorge W."/>
            <person name="Brandt P."/>
            <person name="Grivell L.A."/>
            <person name="Rieger M."/>
            <person name="Weichselgartner M."/>
            <person name="de Simone V."/>
            <person name="Obermaier B."/>
            <person name="Mache R."/>
            <person name="Mueller M."/>
            <person name="Kreis M."/>
            <person name="Delseny M."/>
            <person name="Puigdomenech P."/>
            <person name="Watson M."/>
            <person name="Schmidtheini T."/>
            <person name="Reichert B."/>
            <person name="Portetelle D."/>
            <person name="Perez-Alonso M."/>
            <person name="Boutry M."/>
            <person name="Bancroft I."/>
            <person name="Vos P."/>
            <person name="Hoheisel J."/>
            <person name="Zimmermann W."/>
            <person name="Wedler H."/>
            <person name="Ridley P."/>
            <person name="Langham S.-A."/>
            <person name="McCullagh B."/>
            <person name="Bilham L."/>
            <person name="Robben J."/>
            <person name="van der Schueren J."/>
            <person name="Grymonprez B."/>
            <person name="Chuang Y.-J."/>
            <person name="Vandenbussche F."/>
            <person name="Braeken M."/>
            <person name="Weltjens I."/>
            <person name="Voet M."/>
            <person name="Bastiaens I."/>
            <person name="Aert R."/>
            <person name="Defoor E."/>
            <person name="Weitzenegger T."/>
            <person name="Bothe G."/>
            <person name="Ramsperger U."/>
            <person name="Hilbert H."/>
            <person name="Braun M."/>
            <person name="Holzer E."/>
            <person name="Brandt A."/>
            <person name="Peters S."/>
            <person name="van Staveren M."/>
            <person name="Dirkse W."/>
            <person name="Mooijman P."/>
            <person name="Klein Lankhorst R."/>
            <person name="Rose M."/>
            <person name="Hauf J."/>
            <person name="Koetter P."/>
            <person name="Berneiser S."/>
            <person name="Hempel S."/>
            <person name="Feldpausch M."/>
            <person name="Lamberth S."/>
            <person name="Van den Daele H."/>
            <person name="De Keyser A."/>
            <person name="Buysshaert C."/>
            <person name="Gielen J."/>
            <person name="Villarroel R."/>
            <person name="De Clercq R."/>
            <person name="van Montagu M."/>
            <person name="Rogers J."/>
            <person name="Cronin A."/>
            <person name="Quail M.A."/>
            <person name="Bray-Allen S."/>
            <person name="Clark L."/>
            <person name="Doggett J."/>
            <person name="Hall S."/>
            <person name="Kay M."/>
            <person name="Lennard N."/>
            <person name="McLay K."/>
            <person name="Mayes R."/>
            <person name="Pettett A."/>
            <person name="Rajandream M.A."/>
            <person name="Lyne M."/>
            <person name="Benes V."/>
            <person name="Rechmann S."/>
            <person name="Borkova D."/>
            <person name="Bloecker H."/>
            <person name="Scharfe M."/>
            <person name="Grimm M."/>
            <person name="Loehnert T.-H."/>
            <person name="Dose S."/>
            <person name="de Haan M."/>
            <person name="Maarse A.C."/>
            <person name="Schaefer M."/>
            <person name="Mueller-Auer S."/>
            <person name="Gabel C."/>
            <person name="Fuchs M."/>
            <person name="Fartmann B."/>
            <person name="Granderath K."/>
            <person name="Dauner D."/>
            <person name="Herzl A."/>
            <person name="Neumann S."/>
            <person name="Argiriou A."/>
            <person name="Vitale D."/>
            <person name="Liguori R."/>
            <person name="Piravandi E."/>
            <person name="Massenet O."/>
            <person name="Quigley F."/>
            <person name="Clabauld G."/>
            <person name="Muendlein A."/>
            <person name="Felber R."/>
            <person name="Schnabl S."/>
            <person name="Hiller R."/>
            <person name="Schmidt W."/>
            <person name="Lecharny A."/>
            <person name="Aubourg S."/>
            <person name="Chefdor F."/>
            <person name="Cooke R."/>
            <person name="Berger C."/>
            <person name="Monfort A."/>
            <person name="Casacuberta E."/>
            <person name="Gibbons T."/>
            <person name="Weber N."/>
            <person name="Vandenbol M."/>
            <person name="Bargues M."/>
            <person name="Terol J."/>
            <person name="Torres A."/>
            <person name="Perez-Perez A."/>
            <person name="Purnelle B."/>
            <person name="Bent E."/>
            <person name="Johnson S."/>
            <person name="Tacon D."/>
            <person name="Jesse T."/>
            <person name="Heijnen L."/>
            <person name="Schwarz S."/>
            <person name="Scholler P."/>
            <person name="Heber S."/>
            <person name="Francs P."/>
            <person name="Bielke C."/>
            <person name="Frishman D."/>
            <person name="Haase D."/>
            <person name="Lemcke K."/>
            <person name="Mewes H.-W."/>
            <person name="Stocker S."/>
            <person name="Zaccaria P."/>
            <person name="Bevan M."/>
            <person name="Wilson R.K."/>
            <person name="de la Bastide M."/>
            <person name="Habermann K."/>
            <person name="Parnell L."/>
            <person name="Dedhia N."/>
            <person name="Gnoj L."/>
            <person name="Schutz K."/>
            <person name="Huang E."/>
            <person name="Spiegel L."/>
            <person name="Sekhon M."/>
            <person name="Murray J."/>
            <person name="Sheet P."/>
            <person name="Cordes M."/>
            <person name="Abu-Threideh J."/>
            <person name="Stoneking T."/>
            <person name="Kalicki J."/>
            <person name="Graves T."/>
            <person name="Harmon G."/>
            <person name="Edwards J."/>
            <person name="Latreille P."/>
            <person name="Courtney L."/>
            <person name="Cloud J."/>
            <person name="Abbott A."/>
            <person name="Scott K."/>
            <person name="Johnson D."/>
            <person name="Minx P."/>
            <person name="Bentley D."/>
            <person name="Fulton B."/>
            <person name="Miller N."/>
            <person name="Greco T."/>
            <person name="Kemp K."/>
            <person name="Kramer J."/>
            <person name="Fulton L."/>
            <person name="Mardis E."/>
            <person name="Dante M."/>
            <person name="Pepin K."/>
            <person name="Hillier L.W."/>
            <person name="Nelson J."/>
            <person name="Spieth J."/>
            <person name="Ryan E."/>
            <person name="Andrews S."/>
            <person name="Geisel C."/>
            <person name="Layman D."/>
            <person name="Du H."/>
            <person name="Ali J."/>
            <person name="Berghoff A."/>
            <person name="Jones K."/>
            <person name="Drone K."/>
            <person name="Cotton M."/>
            <person name="Joshu C."/>
            <person name="Antonoiu B."/>
            <person name="Zidanic M."/>
            <person name="Strong C."/>
            <person name="Sun H."/>
            <person name="Lamar B."/>
            <person name="Yordan C."/>
            <person name="Ma P."/>
            <person name="Zhong J."/>
            <person name="Preston R."/>
            <person name="Vil D."/>
            <person name="Shekher M."/>
            <person name="Matero A."/>
            <person name="Shah R."/>
            <person name="Swaby I.K."/>
            <person name="O'Shaughnessy A."/>
            <person name="Rodriguez M."/>
            <person name="Hoffman J."/>
            <person name="Till S."/>
            <person name="Granat S."/>
            <person name="Shohdy N."/>
            <person name="Hasegawa A."/>
            <person name="Hameed A."/>
            <person name="Lodhi M."/>
            <person name="Johnson A."/>
            <person name="Chen E."/>
            <person name="Marra M.A."/>
            <person name="Martienssen R."/>
            <person name="McCombie W.R."/>
        </authorList>
    </citation>
    <scope>NUCLEOTIDE SEQUENCE [LARGE SCALE GENOMIC DNA]</scope>
    <source>
        <strain>cv. Columbia</strain>
    </source>
</reference>
<reference key="3">
    <citation type="journal article" date="2017" name="Plant J.">
        <title>Araport11: a complete reannotation of the Arabidopsis thaliana reference genome.</title>
        <authorList>
            <person name="Cheng C.Y."/>
            <person name="Krishnakumar V."/>
            <person name="Chan A.P."/>
            <person name="Thibaud-Nissen F."/>
            <person name="Schobel S."/>
            <person name="Town C.D."/>
        </authorList>
    </citation>
    <scope>GENOME REANNOTATION</scope>
    <source>
        <strain>cv. Columbia</strain>
    </source>
</reference>
<reference key="4">
    <citation type="journal article" date="2003" name="Science">
        <title>Empirical analysis of transcriptional activity in the Arabidopsis genome.</title>
        <authorList>
            <person name="Yamada K."/>
            <person name="Lim J."/>
            <person name="Dale J.M."/>
            <person name="Chen H."/>
            <person name="Shinn P."/>
            <person name="Palm C.J."/>
            <person name="Southwick A.M."/>
            <person name="Wu H.C."/>
            <person name="Kim C.J."/>
            <person name="Nguyen M."/>
            <person name="Pham P.K."/>
            <person name="Cheuk R.F."/>
            <person name="Karlin-Newmann G."/>
            <person name="Liu S.X."/>
            <person name="Lam B."/>
            <person name="Sakano H."/>
            <person name="Wu T."/>
            <person name="Yu G."/>
            <person name="Miranda M."/>
            <person name="Quach H.L."/>
            <person name="Tripp M."/>
            <person name="Chang C.H."/>
            <person name="Lee J.M."/>
            <person name="Toriumi M.J."/>
            <person name="Chan M.M."/>
            <person name="Tang C.C."/>
            <person name="Onodera C.S."/>
            <person name="Deng J.M."/>
            <person name="Akiyama K."/>
            <person name="Ansari Y."/>
            <person name="Arakawa T."/>
            <person name="Banh J."/>
            <person name="Banno F."/>
            <person name="Bowser L."/>
            <person name="Brooks S.Y."/>
            <person name="Carninci P."/>
            <person name="Chao Q."/>
            <person name="Choy N."/>
            <person name="Enju A."/>
            <person name="Goldsmith A.D."/>
            <person name="Gurjal M."/>
            <person name="Hansen N.F."/>
            <person name="Hayashizaki Y."/>
            <person name="Johnson-Hopson C."/>
            <person name="Hsuan V.W."/>
            <person name="Iida K."/>
            <person name="Karnes M."/>
            <person name="Khan S."/>
            <person name="Koesema E."/>
            <person name="Ishida J."/>
            <person name="Jiang P.X."/>
            <person name="Jones T."/>
            <person name="Kawai J."/>
            <person name="Kamiya A."/>
            <person name="Meyers C."/>
            <person name="Nakajima M."/>
            <person name="Narusaka M."/>
            <person name="Seki M."/>
            <person name="Sakurai T."/>
            <person name="Satou M."/>
            <person name="Tamse R."/>
            <person name="Vaysberg M."/>
            <person name="Wallender E.K."/>
            <person name="Wong C."/>
            <person name="Yamamura Y."/>
            <person name="Yuan S."/>
            <person name="Shinozaki K."/>
            <person name="Davis R.W."/>
            <person name="Theologis A."/>
            <person name="Ecker J.R."/>
        </authorList>
    </citation>
    <scope>NUCLEOTIDE SEQUENCE [LARGE SCALE MRNA]</scope>
    <source>
        <strain>cv. Columbia</strain>
    </source>
</reference>
<gene>
    <name type="primary">DHS2</name>
    <name type="ordered locus">At4g33510</name>
    <name type="ORF">F17M5.270</name>
</gene>
<name>AROG_ARATH</name>
<comment type="catalytic activity">
    <reaction>
        <text>D-erythrose 4-phosphate + phosphoenolpyruvate + H2O = 7-phospho-2-dehydro-3-deoxy-D-arabino-heptonate + phosphate</text>
        <dbReference type="Rhea" id="RHEA:14717"/>
        <dbReference type="ChEBI" id="CHEBI:15377"/>
        <dbReference type="ChEBI" id="CHEBI:16897"/>
        <dbReference type="ChEBI" id="CHEBI:43474"/>
        <dbReference type="ChEBI" id="CHEBI:58394"/>
        <dbReference type="ChEBI" id="CHEBI:58702"/>
        <dbReference type="EC" id="2.5.1.54"/>
    </reaction>
</comment>
<comment type="pathway">
    <text>Metabolic intermediate biosynthesis; chorismate biosynthesis; chorismate from D-erythrose 4-phosphate and phosphoenolpyruvate: step 1/7.</text>
</comment>
<comment type="subcellular location">
    <subcellularLocation>
        <location>Plastid</location>
        <location>Chloroplast</location>
    </subcellularLocation>
</comment>
<comment type="alternative products">
    <event type="alternative splicing"/>
    <isoform>
        <id>Q00218-1</id>
        <name>1</name>
        <sequence type="displayed"/>
    </isoform>
    <text>A number of isoforms are produced. According to EST sequences.</text>
</comment>
<comment type="similarity">
    <text evidence="2">Belongs to the class-II DAHP synthase family.</text>
</comment>
<protein>
    <recommendedName>
        <fullName>Phospho-2-dehydro-3-deoxyheptonate aldolase 2, chloroplastic</fullName>
        <ecNumber>2.5.1.54</ecNumber>
    </recommendedName>
    <alternativeName>
        <fullName>3-deoxy-D-arabino-heptulosonate 7-phosphate synthase 2</fullName>
    </alternativeName>
    <alternativeName>
        <fullName>DAHP synthase 2</fullName>
    </alternativeName>
    <alternativeName>
        <fullName>Phospho-2-keto-3-deoxyheptonate aldolase 2</fullName>
    </alternativeName>
</protein>
<evidence type="ECO:0000255" key="1"/>
<evidence type="ECO:0000305" key="2"/>
<proteinExistence type="evidence at transcript level"/>
<accession>Q00218</accession>
<accession>Q9SZC8</accession>
<sequence>MVTLNASSPLTTKSFLPYRHAPRRPISFSPVFAVHSTDPKKSTQSASASVKWSLESWKSKKALQLPDYPDQKDVDSVLQTLSSFPPIVFAGEARKLEDKLGQAAMGQAFMLQGGDCAESFKEFNANNIRDTFRVLLQMGVVLMFGGQLPVIKVGRMAGQFAKPRSDPFEEKDGVKLPSYRGDNINGDAFDEKSRIPDPHRMVRAYTQSVATLNLLRAFATGGYAAMQRVSQWNLDFTQHSEQGDRYRELANRVDEALGFMGAAGLTSAHPIMTTTEFWTSHECLLLPYEQALTREDSTSGLYYDCSAHMLWVGERTRQLDGAHVEFLRGIANPLGIKVSDKMVPSELVKLIEILNPQNKPGRITVIVRMGAENMRVKLPNLIRAVRGAGQIVTWVSDPMHGNTIMAPGGLKTRSFDAIRAELRAFFDVHDQEGSFPGGVHLEMTGQNVTECVGGSRTITYNDLSSRYHTHCDPRLNASQSLELAFIIAERLRKRRLGSGNLPSSIGV</sequence>
<dbReference type="EC" id="2.5.1.54"/>
<dbReference type="EMBL" id="M74820">
    <property type="protein sequence ID" value="AAA32785.1"/>
    <property type="molecule type" value="mRNA"/>
</dbReference>
<dbReference type="EMBL" id="AL035678">
    <property type="protein sequence ID" value="CAB38809.1"/>
    <property type="molecule type" value="Genomic_DNA"/>
</dbReference>
<dbReference type="EMBL" id="AL161583">
    <property type="protein sequence ID" value="CAB80068.1"/>
    <property type="molecule type" value="Genomic_DNA"/>
</dbReference>
<dbReference type="EMBL" id="CP002687">
    <property type="protein sequence ID" value="AEE86237.1"/>
    <property type="molecule type" value="Genomic_DNA"/>
</dbReference>
<dbReference type="EMBL" id="AF361798">
    <property type="protein sequence ID" value="AAK32811.1"/>
    <property type="molecule type" value="mRNA"/>
</dbReference>
<dbReference type="EMBL" id="AY124858">
    <property type="protein sequence ID" value="AAM70567.1"/>
    <property type="molecule type" value="mRNA"/>
</dbReference>
<dbReference type="PIR" id="T06002">
    <property type="entry name" value="T06002"/>
</dbReference>
<dbReference type="RefSeq" id="NP_195077.1">
    <molecule id="Q00218-1"/>
    <property type="nucleotide sequence ID" value="NM_119505.3"/>
</dbReference>
<dbReference type="SMR" id="Q00218"/>
<dbReference type="BioGRID" id="14773">
    <property type="interactions" value="4"/>
</dbReference>
<dbReference type="FunCoup" id="Q00218">
    <property type="interactions" value="1216"/>
</dbReference>
<dbReference type="IntAct" id="Q00218">
    <property type="interactions" value="3"/>
</dbReference>
<dbReference type="STRING" id="3702.Q00218"/>
<dbReference type="iPTMnet" id="Q00218"/>
<dbReference type="PaxDb" id="3702-AT4G33510.1"/>
<dbReference type="ProteomicsDB" id="246967">
    <molecule id="Q00218-1"/>
</dbReference>
<dbReference type="EnsemblPlants" id="AT4G33510.1">
    <molecule id="Q00218-1"/>
    <property type="protein sequence ID" value="AT4G33510.1"/>
    <property type="gene ID" value="AT4G33510"/>
</dbReference>
<dbReference type="GeneID" id="829489"/>
<dbReference type="Gramene" id="AT4G33510.1">
    <molecule id="Q00218-1"/>
    <property type="protein sequence ID" value="AT4G33510.1"/>
    <property type="gene ID" value="AT4G33510"/>
</dbReference>
<dbReference type="KEGG" id="ath:AT4G33510"/>
<dbReference type="Araport" id="AT4G33510"/>
<dbReference type="TAIR" id="AT4G33510">
    <property type="gene designation" value="DHS2"/>
</dbReference>
<dbReference type="eggNOG" id="ENOG502QPP7">
    <property type="taxonomic scope" value="Eukaryota"/>
</dbReference>
<dbReference type="HOGENOM" id="CLU_026885_0_1_1"/>
<dbReference type="InParanoid" id="Q00218"/>
<dbReference type="OMA" id="QWSLESW"/>
<dbReference type="OrthoDB" id="2338at2759"/>
<dbReference type="PhylomeDB" id="Q00218"/>
<dbReference type="UniPathway" id="UPA00053">
    <property type="reaction ID" value="UER00084"/>
</dbReference>
<dbReference type="CD-CODE" id="4299E36E">
    <property type="entry name" value="Nucleolus"/>
</dbReference>
<dbReference type="PRO" id="PR:Q00218"/>
<dbReference type="Proteomes" id="UP000006548">
    <property type="component" value="Chromosome 4"/>
</dbReference>
<dbReference type="ExpressionAtlas" id="Q00218">
    <property type="expression patterns" value="baseline and differential"/>
</dbReference>
<dbReference type="GO" id="GO:0009507">
    <property type="term" value="C:chloroplast"/>
    <property type="evidence" value="ECO:0007005"/>
    <property type="project" value="TAIR"/>
</dbReference>
<dbReference type="GO" id="GO:0009534">
    <property type="term" value="C:chloroplast thylakoid"/>
    <property type="evidence" value="ECO:0007005"/>
    <property type="project" value="TAIR"/>
</dbReference>
<dbReference type="GO" id="GO:0005886">
    <property type="term" value="C:plasma membrane"/>
    <property type="evidence" value="ECO:0007005"/>
    <property type="project" value="TAIR"/>
</dbReference>
<dbReference type="GO" id="GO:0003849">
    <property type="term" value="F:3-deoxy-7-phosphoheptulonate synthase activity"/>
    <property type="evidence" value="ECO:0007669"/>
    <property type="project" value="UniProtKB-EC"/>
</dbReference>
<dbReference type="GO" id="GO:0008652">
    <property type="term" value="P:amino acid biosynthetic process"/>
    <property type="evidence" value="ECO:0007669"/>
    <property type="project" value="UniProtKB-KW"/>
</dbReference>
<dbReference type="GO" id="GO:0009073">
    <property type="term" value="P:aromatic amino acid family biosynthetic process"/>
    <property type="evidence" value="ECO:0007669"/>
    <property type="project" value="UniProtKB-KW"/>
</dbReference>
<dbReference type="GO" id="GO:0009423">
    <property type="term" value="P:chorismate biosynthetic process"/>
    <property type="evidence" value="ECO:0007669"/>
    <property type="project" value="UniProtKB-UniPathway"/>
</dbReference>
<dbReference type="FunFam" id="3.20.20.70:FF:000128">
    <property type="entry name" value="Phospho-2-dehydro-3-deoxyheptonate aldolase"/>
    <property type="match status" value="1"/>
</dbReference>
<dbReference type="Gene3D" id="3.20.20.70">
    <property type="entry name" value="Aldolase class I"/>
    <property type="match status" value="2"/>
</dbReference>
<dbReference type="InterPro" id="IPR013785">
    <property type="entry name" value="Aldolase_TIM"/>
</dbReference>
<dbReference type="InterPro" id="IPR002480">
    <property type="entry name" value="DAHP_synth_2"/>
</dbReference>
<dbReference type="NCBIfam" id="TIGR01358">
    <property type="entry name" value="DAHP_synth_II"/>
    <property type="match status" value="1"/>
</dbReference>
<dbReference type="PANTHER" id="PTHR21337">
    <property type="entry name" value="PHOSPHO-2-DEHYDRO-3-DEOXYHEPTONATE ALDOLASE 1, 2"/>
    <property type="match status" value="1"/>
</dbReference>
<dbReference type="PANTHER" id="PTHR21337:SF28">
    <property type="entry name" value="PHOSPHO-2-DEHYDRO-3-DEOXYHEPTONATE ALDOLASE 2, CHLOROPLASTIC"/>
    <property type="match status" value="1"/>
</dbReference>
<dbReference type="Pfam" id="PF01474">
    <property type="entry name" value="DAHP_synth_2"/>
    <property type="match status" value="1"/>
</dbReference>
<dbReference type="SUPFAM" id="SSF51569">
    <property type="entry name" value="Aldolase"/>
    <property type="match status" value="1"/>
</dbReference>
<feature type="transit peptide" description="Chloroplast" evidence="1">
    <location>
        <begin position="1"/>
        <end status="unknown"/>
    </location>
</feature>
<feature type="chain" id="PRO_0000002299" description="Phospho-2-dehydro-3-deoxyheptonate aldolase 2, chloroplastic">
    <location>
        <begin status="unknown"/>
        <end position="507"/>
    </location>
</feature>
<feature type="sequence conflict" description="In Ref. 1; AAA32785." evidence="2" ref="1">
    <original>S</original>
    <variation>L</variation>
    <location>
        <position position="165"/>
    </location>
</feature>